<comment type="function">
    <text evidence="1">In the hair cortex, hair keratin intermediate filaments are embedded in an interfilamentous matrix, consisting of hair keratin-associated proteins (KRTAP), which are essential for the formation of a rigid and resistant hair shaft through their extensive disulfide bond cross-linking with abundant cysteine residues of hair keratins. The matrix proteins include the high-sulfur and high-glycine-tyrosine keratins (By similarity).</text>
</comment>
<comment type="subunit">
    <text evidence="1">Interacts with hair keratins.</text>
</comment>
<comment type="similarity">
    <text evidence="2">Belongs to the KRTAP type 9 family.</text>
</comment>
<evidence type="ECO:0000250" key="1"/>
<evidence type="ECO:0000305" key="2"/>
<evidence type="ECO:0000312" key="3">
    <source>
        <dbReference type="HGNC" id="HGNC:18912"/>
    </source>
</evidence>
<sequence>MTHCCSPCCQPTCCRTTCCRTTCWKPTTVTTCSSTPCCQPSCCVPSCCQPCCHPTCCQNTCCRTTCCQPTCVASCCQPSCCSTPCCQPTCCGSSCCGQTSCGSSCCQPICGSSCCQPCCHPTCYQTICFRTTCCQPTCCQPTCCRNTSCQPTCCGSSCCQPCCHPTCCQTICRSTCCQPSCVTRCCSTPCCQPTCGGSSCCSQTCNESSYCLPCCRPTCCQTTCYRTTCCRPSCCCSPCCVSSCCQPSCC</sequence>
<gene>
    <name evidence="3" type="primary">KRTAP9-1</name>
    <name type="synonym">KAP9.1</name>
    <name type="synonym">KRTAP9.1</name>
    <name evidence="3" type="synonym">KRTAP9L3</name>
</gene>
<feature type="chain" id="PRO_0000332261" description="Keratin-associated protein 9-1">
    <location>
        <begin position="1"/>
        <end position="250"/>
    </location>
</feature>
<feature type="repeat" description="1">
    <location>
        <begin position="8"/>
        <end position="12"/>
    </location>
</feature>
<feature type="repeat" description="2">
    <location>
        <begin position="13"/>
        <end position="17"/>
    </location>
</feature>
<feature type="repeat" description="3">
    <location>
        <begin position="18"/>
        <end position="22"/>
    </location>
</feature>
<feature type="repeat" description="4">
    <location>
        <begin position="37"/>
        <end position="41"/>
    </location>
</feature>
<feature type="repeat" description="5">
    <location>
        <begin position="42"/>
        <end position="46"/>
    </location>
</feature>
<feature type="repeat" description="6">
    <location>
        <begin position="51"/>
        <end position="55"/>
    </location>
</feature>
<feature type="repeat" description="7">
    <location>
        <begin position="56"/>
        <end position="60"/>
    </location>
</feature>
<feature type="repeat" description="8">
    <location>
        <begin position="61"/>
        <end position="65"/>
    </location>
</feature>
<feature type="repeat" description="9">
    <location>
        <begin position="66"/>
        <end position="70"/>
    </location>
</feature>
<feature type="repeat" description="10">
    <location>
        <begin position="75"/>
        <end position="79"/>
    </location>
</feature>
<feature type="repeat" description="11">
    <location>
        <begin position="80"/>
        <end position="84"/>
    </location>
</feature>
<feature type="repeat" description="12">
    <location>
        <begin position="85"/>
        <end position="89"/>
    </location>
</feature>
<feature type="repeat" description="13">
    <location>
        <begin position="90"/>
        <end position="94"/>
    </location>
</feature>
<feature type="repeat" description="14">
    <location>
        <begin position="95"/>
        <end position="99"/>
    </location>
</feature>
<feature type="repeat" description="15">
    <location>
        <begin position="105"/>
        <end position="109"/>
    </location>
</feature>
<feature type="repeat" description="16">
    <location>
        <begin position="114"/>
        <end position="117"/>
    </location>
</feature>
<feature type="repeat" description="17">
    <location>
        <begin position="118"/>
        <end position="121"/>
    </location>
</feature>
<feature type="repeat" description="18">
    <location>
        <begin position="133"/>
        <end position="137"/>
    </location>
</feature>
<feature type="repeat" description="19">
    <location>
        <begin position="138"/>
        <end position="142"/>
    </location>
</feature>
<feature type="repeat" description="20">
    <location>
        <begin position="143"/>
        <end position="147"/>
    </location>
</feature>
<feature type="repeat" description="21">
    <location>
        <begin position="153"/>
        <end position="157"/>
    </location>
</feature>
<feature type="repeat" description="22">
    <location>
        <begin position="162"/>
        <end position="166"/>
    </location>
</feature>
<feature type="repeat" description="23">
    <location>
        <begin position="167"/>
        <end position="171"/>
    </location>
</feature>
<feature type="repeat" description="24">
    <location>
        <begin position="176"/>
        <end position="180"/>
    </location>
</feature>
<feature type="repeat" description="25">
    <location>
        <begin position="185"/>
        <end position="189"/>
    </location>
</feature>
<feature type="repeat" description="26">
    <location>
        <begin position="190"/>
        <end position="194"/>
    </location>
</feature>
<feature type="repeat" description="27">
    <location>
        <begin position="214"/>
        <end position="218"/>
    </location>
</feature>
<feature type="repeat" description="28">
    <location>
        <begin position="219"/>
        <end position="223"/>
    </location>
</feature>
<feature type="repeat" description="29">
    <location>
        <begin position="229"/>
        <end position="233"/>
    </location>
</feature>
<feature type="repeat" description="30">
    <location>
        <begin position="234"/>
        <end position="238"/>
    </location>
</feature>
<feature type="repeat" description="31">
    <location>
        <begin position="239"/>
        <end position="243"/>
    </location>
</feature>
<feature type="repeat" description="32">
    <location>
        <begin position="244"/>
        <end position="248"/>
    </location>
</feature>
<feature type="region of interest" description="32 X 5 AA repeats of C-C-[CGSVRQH]-[SQTNP]-[PTSI]">
    <location>
        <begin position="8"/>
        <end position="248"/>
    </location>
</feature>
<protein>
    <recommendedName>
        <fullName evidence="2">Keratin-associated protein 9-1</fullName>
    </recommendedName>
    <alternativeName>
        <fullName evidence="3">Keratin-associated protein 9-like 3</fullName>
    </alternativeName>
</protein>
<name>KRA91_HUMAN</name>
<proteinExistence type="evidence at protein level"/>
<dbReference type="EMBL" id="AC006070">
    <property type="status" value="NOT_ANNOTATED_CDS"/>
    <property type="molecule type" value="Genomic_DNA"/>
</dbReference>
<dbReference type="CCDS" id="CCDS56029.1"/>
<dbReference type="RefSeq" id="NP_001177389.1">
    <property type="nucleotide sequence ID" value="NM_001190460.1"/>
</dbReference>
<dbReference type="BioGRID" id="608746">
    <property type="interactions" value="1"/>
</dbReference>
<dbReference type="FunCoup" id="A8MXZ3">
    <property type="interactions" value="11"/>
</dbReference>
<dbReference type="STRING" id="9606.ENSP00000381488"/>
<dbReference type="iPTMnet" id="A8MXZ3"/>
<dbReference type="PhosphoSitePlus" id="A8MXZ3"/>
<dbReference type="BioMuta" id="KRTAP9-1"/>
<dbReference type="MassIVE" id="A8MXZ3"/>
<dbReference type="PaxDb" id="9606-ENSP00000381488"/>
<dbReference type="PeptideAtlas" id="A8MXZ3"/>
<dbReference type="ProteomicsDB" id="2365"/>
<dbReference type="DNASU" id="728318"/>
<dbReference type="Ensembl" id="ENST00000398470.1">
    <property type="protein sequence ID" value="ENSP00000381488.1"/>
    <property type="gene ID" value="ENSG00000240542.6"/>
</dbReference>
<dbReference type="GeneID" id="728318"/>
<dbReference type="KEGG" id="hsa:728318"/>
<dbReference type="MANE-Select" id="ENST00000398470.1">
    <property type="protein sequence ID" value="ENSP00000381488.1"/>
    <property type="RefSeq nucleotide sequence ID" value="NM_001190460.1"/>
    <property type="RefSeq protein sequence ID" value="NP_001177389.1"/>
</dbReference>
<dbReference type="UCSC" id="uc021txf.1">
    <property type="organism name" value="human"/>
</dbReference>
<dbReference type="AGR" id="HGNC:18912"/>
<dbReference type="CTD" id="728318"/>
<dbReference type="GeneCards" id="KRTAP9-1"/>
<dbReference type="HGNC" id="HGNC:18912">
    <property type="gene designation" value="KRTAP9-1"/>
</dbReference>
<dbReference type="HPA" id="ENSG00000240542">
    <property type="expression patterns" value="Not detected"/>
</dbReference>
<dbReference type="neXtProt" id="NX_A8MXZ3"/>
<dbReference type="PharmGKB" id="PA134939475"/>
<dbReference type="VEuPathDB" id="HostDB:ENSG00000240542"/>
<dbReference type="eggNOG" id="KOG4726">
    <property type="taxonomic scope" value="Eukaryota"/>
</dbReference>
<dbReference type="GeneTree" id="ENSGT00940000165697"/>
<dbReference type="HOGENOM" id="CLU_113141_0_0_1"/>
<dbReference type="InParanoid" id="A8MXZ3"/>
<dbReference type="OMA" id="CGTHCCG"/>
<dbReference type="PAN-GO" id="A8MXZ3">
    <property type="GO annotations" value="0 GO annotations based on evolutionary models"/>
</dbReference>
<dbReference type="PhylomeDB" id="A8MXZ3"/>
<dbReference type="TreeFam" id="TF351356"/>
<dbReference type="PathwayCommons" id="A8MXZ3"/>
<dbReference type="Reactome" id="R-HSA-6805567">
    <property type="pathway name" value="Keratinization"/>
</dbReference>
<dbReference type="SignaLink" id="A8MXZ3"/>
<dbReference type="BioGRID-ORCS" id="728318">
    <property type="hits" value="12 hits in 1104 CRISPR screens"/>
</dbReference>
<dbReference type="GenomeRNAi" id="728318"/>
<dbReference type="Pharos" id="A8MXZ3">
    <property type="development level" value="Tdark"/>
</dbReference>
<dbReference type="PRO" id="PR:A8MXZ3"/>
<dbReference type="Proteomes" id="UP000005640">
    <property type="component" value="Chromosome 17"/>
</dbReference>
<dbReference type="RNAct" id="A8MXZ3">
    <property type="molecule type" value="protein"/>
</dbReference>
<dbReference type="Bgee" id="ENSG00000240542">
    <property type="expression patterns" value="Expressed in granulocyte and 8 other cell types or tissues"/>
</dbReference>
<dbReference type="ExpressionAtlas" id="A8MXZ3">
    <property type="expression patterns" value="baseline and differential"/>
</dbReference>
<dbReference type="GO" id="GO:0005829">
    <property type="term" value="C:cytosol"/>
    <property type="evidence" value="ECO:0000304"/>
    <property type="project" value="Reactome"/>
</dbReference>
<dbReference type="GO" id="GO:0045095">
    <property type="term" value="C:keratin filament"/>
    <property type="evidence" value="ECO:0007669"/>
    <property type="project" value="InterPro"/>
</dbReference>
<dbReference type="InterPro" id="IPR002494">
    <property type="entry name" value="KAP"/>
</dbReference>
<dbReference type="PANTHER" id="PTHR23262:SF28">
    <property type="entry name" value="DOMAIN TRANSCRIPTION FACTOR AP2-O3, PUTATIVE-RELATED"/>
    <property type="match status" value="1"/>
</dbReference>
<dbReference type="PANTHER" id="PTHR23262">
    <property type="entry name" value="KERATIN ASSOCIATED PROTEIN"/>
    <property type="match status" value="1"/>
</dbReference>
<dbReference type="Pfam" id="PF13885">
    <property type="entry name" value="Keratin_B2_2"/>
    <property type="match status" value="2"/>
</dbReference>
<reference key="1">
    <citation type="journal article" date="2006" name="Nature">
        <title>DNA sequence of human chromosome 17 and analysis of rearrangement in the human lineage.</title>
        <authorList>
            <person name="Zody M.C."/>
            <person name="Garber M."/>
            <person name="Adams D.J."/>
            <person name="Sharpe T."/>
            <person name="Harrow J."/>
            <person name="Lupski J.R."/>
            <person name="Nicholson C."/>
            <person name="Searle S.M."/>
            <person name="Wilming L."/>
            <person name="Young S.K."/>
            <person name="Abouelleil A."/>
            <person name="Allen N.R."/>
            <person name="Bi W."/>
            <person name="Bloom T."/>
            <person name="Borowsky M.L."/>
            <person name="Bugalter B.E."/>
            <person name="Butler J."/>
            <person name="Chang J.L."/>
            <person name="Chen C.-K."/>
            <person name="Cook A."/>
            <person name="Corum B."/>
            <person name="Cuomo C.A."/>
            <person name="de Jong P.J."/>
            <person name="DeCaprio D."/>
            <person name="Dewar K."/>
            <person name="FitzGerald M."/>
            <person name="Gilbert J."/>
            <person name="Gibson R."/>
            <person name="Gnerre S."/>
            <person name="Goldstein S."/>
            <person name="Grafham D.V."/>
            <person name="Grocock R."/>
            <person name="Hafez N."/>
            <person name="Hagopian D.S."/>
            <person name="Hart E."/>
            <person name="Norman C.H."/>
            <person name="Humphray S."/>
            <person name="Jaffe D.B."/>
            <person name="Jones M."/>
            <person name="Kamal M."/>
            <person name="Khodiyar V.K."/>
            <person name="LaButti K."/>
            <person name="Laird G."/>
            <person name="Lehoczky J."/>
            <person name="Liu X."/>
            <person name="Lokyitsang T."/>
            <person name="Loveland J."/>
            <person name="Lui A."/>
            <person name="Macdonald P."/>
            <person name="Major J.E."/>
            <person name="Matthews L."/>
            <person name="Mauceli E."/>
            <person name="McCarroll S.A."/>
            <person name="Mihalev A.H."/>
            <person name="Mudge J."/>
            <person name="Nguyen C."/>
            <person name="Nicol R."/>
            <person name="O'Leary S.B."/>
            <person name="Osoegawa K."/>
            <person name="Schwartz D.C."/>
            <person name="Shaw-Smith C."/>
            <person name="Stankiewicz P."/>
            <person name="Steward C."/>
            <person name="Swarbreck D."/>
            <person name="Venkataraman V."/>
            <person name="Whittaker C.A."/>
            <person name="Yang X."/>
            <person name="Zimmer A.R."/>
            <person name="Bradley A."/>
            <person name="Hubbard T."/>
            <person name="Birren B.W."/>
            <person name="Rogers J."/>
            <person name="Lander E.S."/>
            <person name="Nusbaum C."/>
        </authorList>
    </citation>
    <scope>NUCLEOTIDE SEQUENCE [LARGE SCALE GENOMIC DNA]</scope>
</reference>
<organism>
    <name type="scientific">Homo sapiens</name>
    <name type="common">Human</name>
    <dbReference type="NCBI Taxonomy" id="9606"/>
    <lineage>
        <taxon>Eukaryota</taxon>
        <taxon>Metazoa</taxon>
        <taxon>Chordata</taxon>
        <taxon>Craniata</taxon>
        <taxon>Vertebrata</taxon>
        <taxon>Euteleostomi</taxon>
        <taxon>Mammalia</taxon>
        <taxon>Eutheria</taxon>
        <taxon>Euarchontoglires</taxon>
        <taxon>Primates</taxon>
        <taxon>Haplorrhini</taxon>
        <taxon>Catarrhini</taxon>
        <taxon>Hominidae</taxon>
        <taxon>Homo</taxon>
    </lineage>
</organism>
<keyword id="KW-0416">Keratin</keyword>
<keyword id="KW-1267">Proteomics identification</keyword>
<keyword id="KW-1185">Reference proteome</keyword>
<keyword id="KW-0677">Repeat</keyword>
<accession>A8MXZ3</accession>